<name>HIS8_PECAS</name>
<keyword id="KW-0028">Amino-acid biosynthesis</keyword>
<keyword id="KW-0032">Aminotransferase</keyword>
<keyword id="KW-0368">Histidine biosynthesis</keyword>
<keyword id="KW-0663">Pyridoxal phosphate</keyword>
<keyword id="KW-1185">Reference proteome</keyword>
<keyword id="KW-0808">Transferase</keyword>
<gene>
    <name evidence="1" type="primary">hisC</name>
    <name type="ordered locus">ECA2584</name>
</gene>
<reference key="1">
    <citation type="journal article" date="2004" name="Proc. Natl. Acad. Sci. U.S.A.">
        <title>Genome sequence of the enterobacterial phytopathogen Erwinia carotovora subsp. atroseptica and characterization of virulence factors.</title>
        <authorList>
            <person name="Bell K.S."/>
            <person name="Sebaihia M."/>
            <person name="Pritchard L."/>
            <person name="Holden M.T.G."/>
            <person name="Hyman L.J."/>
            <person name="Holeva M.C."/>
            <person name="Thomson N.R."/>
            <person name="Bentley S.D."/>
            <person name="Churcher L.J.C."/>
            <person name="Mungall K."/>
            <person name="Atkin R."/>
            <person name="Bason N."/>
            <person name="Brooks K."/>
            <person name="Chillingworth T."/>
            <person name="Clark K."/>
            <person name="Doggett J."/>
            <person name="Fraser A."/>
            <person name="Hance Z."/>
            <person name="Hauser H."/>
            <person name="Jagels K."/>
            <person name="Moule S."/>
            <person name="Norbertczak H."/>
            <person name="Ormond D."/>
            <person name="Price C."/>
            <person name="Quail M.A."/>
            <person name="Sanders M."/>
            <person name="Walker D."/>
            <person name="Whitehead S."/>
            <person name="Salmond G.P.C."/>
            <person name="Birch P.R.J."/>
            <person name="Parkhill J."/>
            <person name="Toth I.K."/>
        </authorList>
    </citation>
    <scope>NUCLEOTIDE SEQUENCE [LARGE SCALE GENOMIC DNA]</scope>
    <source>
        <strain>SCRI 1043 / ATCC BAA-672</strain>
    </source>
</reference>
<evidence type="ECO:0000255" key="1">
    <source>
        <dbReference type="HAMAP-Rule" id="MF_01023"/>
    </source>
</evidence>
<proteinExistence type="inferred from homology"/>
<dbReference type="EC" id="2.6.1.9" evidence="1"/>
<dbReference type="EMBL" id="BX950851">
    <property type="protein sequence ID" value="CAG75483.1"/>
    <property type="molecule type" value="Genomic_DNA"/>
</dbReference>
<dbReference type="RefSeq" id="WP_011094129.1">
    <property type="nucleotide sequence ID" value="NC_004547.2"/>
</dbReference>
<dbReference type="SMR" id="Q6D410"/>
<dbReference type="STRING" id="218491.ECA2584"/>
<dbReference type="KEGG" id="eca:ECA2584"/>
<dbReference type="PATRIC" id="fig|218491.5.peg.2618"/>
<dbReference type="eggNOG" id="COG0079">
    <property type="taxonomic scope" value="Bacteria"/>
</dbReference>
<dbReference type="HOGENOM" id="CLU_017584_3_1_6"/>
<dbReference type="OrthoDB" id="9813612at2"/>
<dbReference type="UniPathway" id="UPA00031">
    <property type="reaction ID" value="UER00012"/>
</dbReference>
<dbReference type="Proteomes" id="UP000007966">
    <property type="component" value="Chromosome"/>
</dbReference>
<dbReference type="GO" id="GO:0004400">
    <property type="term" value="F:histidinol-phosphate transaminase activity"/>
    <property type="evidence" value="ECO:0007669"/>
    <property type="project" value="UniProtKB-UniRule"/>
</dbReference>
<dbReference type="GO" id="GO:0030170">
    <property type="term" value="F:pyridoxal phosphate binding"/>
    <property type="evidence" value="ECO:0007669"/>
    <property type="project" value="InterPro"/>
</dbReference>
<dbReference type="GO" id="GO:0000105">
    <property type="term" value="P:L-histidine biosynthetic process"/>
    <property type="evidence" value="ECO:0007669"/>
    <property type="project" value="UniProtKB-UniRule"/>
</dbReference>
<dbReference type="CDD" id="cd00609">
    <property type="entry name" value="AAT_like"/>
    <property type="match status" value="1"/>
</dbReference>
<dbReference type="Gene3D" id="3.90.1150.10">
    <property type="entry name" value="Aspartate Aminotransferase, domain 1"/>
    <property type="match status" value="1"/>
</dbReference>
<dbReference type="Gene3D" id="3.40.640.10">
    <property type="entry name" value="Type I PLP-dependent aspartate aminotransferase-like (Major domain)"/>
    <property type="match status" value="1"/>
</dbReference>
<dbReference type="HAMAP" id="MF_01023">
    <property type="entry name" value="HisC_aminotrans_2"/>
    <property type="match status" value="1"/>
</dbReference>
<dbReference type="InterPro" id="IPR001917">
    <property type="entry name" value="Aminotrans_II_pyridoxalP_BS"/>
</dbReference>
<dbReference type="InterPro" id="IPR004839">
    <property type="entry name" value="Aminotransferase_I/II_large"/>
</dbReference>
<dbReference type="InterPro" id="IPR005861">
    <property type="entry name" value="HisP_aminotrans"/>
</dbReference>
<dbReference type="InterPro" id="IPR015424">
    <property type="entry name" value="PyrdxlP-dep_Trfase"/>
</dbReference>
<dbReference type="InterPro" id="IPR015421">
    <property type="entry name" value="PyrdxlP-dep_Trfase_major"/>
</dbReference>
<dbReference type="InterPro" id="IPR015422">
    <property type="entry name" value="PyrdxlP-dep_Trfase_small"/>
</dbReference>
<dbReference type="NCBIfam" id="TIGR01141">
    <property type="entry name" value="hisC"/>
    <property type="match status" value="1"/>
</dbReference>
<dbReference type="PANTHER" id="PTHR42885:SF2">
    <property type="entry name" value="HISTIDINOL-PHOSPHATE AMINOTRANSFERASE"/>
    <property type="match status" value="1"/>
</dbReference>
<dbReference type="PANTHER" id="PTHR42885">
    <property type="entry name" value="HISTIDINOL-PHOSPHATE AMINOTRANSFERASE-RELATED"/>
    <property type="match status" value="1"/>
</dbReference>
<dbReference type="Pfam" id="PF00155">
    <property type="entry name" value="Aminotran_1_2"/>
    <property type="match status" value="1"/>
</dbReference>
<dbReference type="SUPFAM" id="SSF53383">
    <property type="entry name" value="PLP-dependent transferases"/>
    <property type="match status" value="1"/>
</dbReference>
<dbReference type="PROSITE" id="PS00599">
    <property type="entry name" value="AA_TRANSFER_CLASS_2"/>
    <property type="match status" value="1"/>
</dbReference>
<comment type="catalytic activity">
    <reaction evidence="1">
        <text>L-histidinol phosphate + 2-oxoglutarate = 3-(imidazol-4-yl)-2-oxopropyl phosphate + L-glutamate</text>
        <dbReference type="Rhea" id="RHEA:23744"/>
        <dbReference type="ChEBI" id="CHEBI:16810"/>
        <dbReference type="ChEBI" id="CHEBI:29985"/>
        <dbReference type="ChEBI" id="CHEBI:57766"/>
        <dbReference type="ChEBI" id="CHEBI:57980"/>
        <dbReference type="EC" id="2.6.1.9"/>
    </reaction>
</comment>
<comment type="cofactor">
    <cofactor evidence="1">
        <name>pyridoxal 5'-phosphate</name>
        <dbReference type="ChEBI" id="CHEBI:597326"/>
    </cofactor>
</comment>
<comment type="pathway">
    <text evidence="1">Amino-acid biosynthesis; L-histidine biosynthesis; L-histidine from 5-phospho-alpha-D-ribose 1-diphosphate: step 7/9.</text>
</comment>
<comment type="subunit">
    <text evidence="1">Homodimer.</text>
</comment>
<comment type="similarity">
    <text evidence="1">Belongs to the class-II pyridoxal-phosphate-dependent aminotransferase family. Histidinol-phosphate aminotransferase subfamily.</text>
</comment>
<protein>
    <recommendedName>
        <fullName evidence="1">Histidinol-phosphate aminotransferase</fullName>
        <ecNumber evidence="1">2.6.1.9</ecNumber>
    </recommendedName>
    <alternativeName>
        <fullName evidence="1">Imidazole acetol-phosphate transaminase</fullName>
    </alternativeName>
</protein>
<sequence>MSSIEELARANVRALTPYQSARRLGGNGDVWLNANEYPQAPEFQLTLQTLNRYPECQPVMVINRYAEYAGVTPEQVLVSRGADEGIELLIRAFCEPGKDAILFCPPTYGMYAVSAETFGVERRTAASKSDWQLDLDAIESQLDGTKVVYVCSPNNPTGNLIARDDLRQLLTLAQGKALVVIDEAYIEFCPQASTASWLAEFPHLVILRTLSKAFSLAGLRCGFTLANPEVIQLLLKVIAPYPLSTPVADIAAQALSHEGIAKMKANVAEVTTNRRWLSDILKNIPCIEEVFHSESNYLLVRFTASPSVFKTLWDQGIILRDQNKQPSLAGCLRITIGNRYECERVVAALQSLPGINA</sequence>
<feature type="chain" id="PRO_0000153359" description="Histidinol-phosphate aminotransferase">
    <location>
        <begin position="1"/>
        <end position="357"/>
    </location>
</feature>
<feature type="modified residue" description="N6-(pyridoxal phosphate)lysine" evidence="1">
    <location>
        <position position="212"/>
    </location>
</feature>
<accession>Q6D410</accession>
<organism>
    <name type="scientific">Pectobacterium atrosepticum (strain SCRI 1043 / ATCC BAA-672)</name>
    <name type="common">Erwinia carotovora subsp. atroseptica</name>
    <dbReference type="NCBI Taxonomy" id="218491"/>
    <lineage>
        <taxon>Bacteria</taxon>
        <taxon>Pseudomonadati</taxon>
        <taxon>Pseudomonadota</taxon>
        <taxon>Gammaproteobacteria</taxon>
        <taxon>Enterobacterales</taxon>
        <taxon>Pectobacteriaceae</taxon>
        <taxon>Pectobacterium</taxon>
    </lineage>
</organism>